<protein>
    <recommendedName>
        <fullName evidence="1">Energy-coupling factor transporter ATP-binding protein EcfA1</fullName>
        <shortName evidence="1">ECF transporter A component EcfA1</shortName>
        <ecNumber evidence="1">7.-.-.-</ecNumber>
    </recommendedName>
</protein>
<reference key="1">
    <citation type="journal article" date="1995" name="Science">
        <title>The minimal gene complement of Mycoplasma genitalium.</title>
        <authorList>
            <person name="Fraser C.M."/>
            <person name="Gocayne J.D."/>
            <person name="White O."/>
            <person name="Adams M.D."/>
            <person name="Clayton R.A."/>
            <person name="Fleischmann R.D."/>
            <person name="Bult C.J."/>
            <person name="Kerlavage A.R."/>
            <person name="Sutton G.G."/>
            <person name="Kelley J.M."/>
            <person name="Fritchman J.L."/>
            <person name="Weidman J.F."/>
            <person name="Small K.V."/>
            <person name="Sandusky M."/>
            <person name="Fuhrmann J.L."/>
            <person name="Nguyen D.T."/>
            <person name="Utterback T.R."/>
            <person name="Saudek D.M."/>
            <person name="Phillips C.A."/>
            <person name="Merrick J.M."/>
            <person name="Tomb J.-F."/>
            <person name="Dougherty B.A."/>
            <person name="Bott K.F."/>
            <person name="Hu P.-C."/>
            <person name="Lucier T.S."/>
            <person name="Peterson S.N."/>
            <person name="Smith H.O."/>
            <person name="Hutchison C.A. III"/>
            <person name="Venter J.C."/>
        </authorList>
    </citation>
    <scope>NUCLEOTIDE SEQUENCE [LARGE SCALE GENOMIC DNA]</scope>
    <source>
        <strain>ATCC 33530 / DSM 19775 / NCTC 10195 / G37</strain>
    </source>
</reference>
<name>ECFA1_MYCGE</name>
<organism>
    <name type="scientific">Mycoplasma genitalium (strain ATCC 33530 / DSM 19775 / NCTC 10195 / G37)</name>
    <name type="common">Mycoplasmoides genitalium</name>
    <dbReference type="NCBI Taxonomy" id="243273"/>
    <lineage>
        <taxon>Bacteria</taxon>
        <taxon>Bacillati</taxon>
        <taxon>Mycoplasmatota</taxon>
        <taxon>Mycoplasmoidales</taxon>
        <taxon>Mycoplasmoidaceae</taxon>
        <taxon>Mycoplasmoides</taxon>
    </lineage>
</organism>
<keyword id="KW-0067">ATP-binding</keyword>
<keyword id="KW-1003">Cell membrane</keyword>
<keyword id="KW-0472">Membrane</keyword>
<keyword id="KW-0547">Nucleotide-binding</keyword>
<keyword id="KW-1185">Reference proteome</keyword>
<keyword id="KW-1278">Translocase</keyword>
<keyword id="KW-0813">Transport</keyword>
<feature type="chain" id="PRO_0000092036" description="Energy-coupling factor transporter ATP-binding protein EcfA1">
    <location>
        <begin position="1"/>
        <end position="274"/>
    </location>
</feature>
<feature type="domain" description="ABC transporter" evidence="1">
    <location>
        <begin position="9"/>
        <end position="240"/>
    </location>
</feature>
<feature type="binding site" evidence="1">
    <location>
        <begin position="41"/>
        <end position="48"/>
    </location>
    <ligand>
        <name>ATP</name>
        <dbReference type="ChEBI" id="CHEBI:30616"/>
    </ligand>
</feature>
<gene>
    <name evidence="1" type="primary">ecfA1</name>
    <name type="synonym">cbiO1</name>
    <name type="ordered locus">MG179</name>
</gene>
<accession>P47425</accession>
<evidence type="ECO:0000255" key="1">
    <source>
        <dbReference type="HAMAP-Rule" id="MF_01710"/>
    </source>
</evidence>
<dbReference type="EC" id="7.-.-.-" evidence="1"/>
<dbReference type="EMBL" id="L43967">
    <property type="protein sequence ID" value="AAC71398.1"/>
    <property type="molecule type" value="Genomic_DNA"/>
</dbReference>
<dbReference type="PIR" id="H64219">
    <property type="entry name" value="H64219"/>
</dbReference>
<dbReference type="RefSeq" id="WP_009885864.1">
    <property type="nucleotide sequence ID" value="NC_000908.2"/>
</dbReference>
<dbReference type="SMR" id="P47425"/>
<dbReference type="FunCoup" id="P47425">
    <property type="interactions" value="126"/>
</dbReference>
<dbReference type="STRING" id="243273.MG_179"/>
<dbReference type="GeneID" id="88282311"/>
<dbReference type="KEGG" id="mge:MG_179"/>
<dbReference type="eggNOG" id="COG1122">
    <property type="taxonomic scope" value="Bacteria"/>
</dbReference>
<dbReference type="HOGENOM" id="CLU_000604_1_22_14"/>
<dbReference type="InParanoid" id="P47425"/>
<dbReference type="OrthoDB" id="9784332at2"/>
<dbReference type="BioCyc" id="MGEN243273:G1GJ2-203-MONOMER"/>
<dbReference type="Proteomes" id="UP000000807">
    <property type="component" value="Chromosome"/>
</dbReference>
<dbReference type="GO" id="GO:0043190">
    <property type="term" value="C:ATP-binding cassette (ABC) transporter complex"/>
    <property type="evidence" value="ECO:0000318"/>
    <property type="project" value="GO_Central"/>
</dbReference>
<dbReference type="GO" id="GO:0005524">
    <property type="term" value="F:ATP binding"/>
    <property type="evidence" value="ECO:0000318"/>
    <property type="project" value="GO_Central"/>
</dbReference>
<dbReference type="GO" id="GO:0016887">
    <property type="term" value="F:ATP hydrolysis activity"/>
    <property type="evidence" value="ECO:0007669"/>
    <property type="project" value="InterPro"/>
</dbReference>
<dbReference type="GO" id="GO:0042626">
    <property type="term" value="F:ATPase-coupled transmembrane transporter activity"/>
    <property type="evidence" value="ECO:0000318"/>
    <property type="project" value="GO_Central"/>
</dbReference>
<dbReference type="CDD" id="cd03225">
    <property type="entry name" value="ABC_cobalt_CbiO_domain1"/>
    <property type="match status" value="1"/>
</dbReference>
<dbReference type="FunFam" id="3.40.50.300:FF:000224">
    <property type="entry name" value="Energy-coupling factor transporter ATP-binding protein EcfA"/>
    <property type="match status" value="1"/>
</dbReference>
<dbReference type="Gene3D" id="3.40.50.300">
    <property type="entry name" value="P-loop containing nucleotide triphosphate hydrolases"/>
    <property type="match status" value="1"/>
</dbReference>
<dbReference type="InterPro" id="IPR003593">
    <property type="entry name" value="AAA+_ATPase"/>
</dbReference>
<dbReference type="InterPro" id="IPR003439">
    <property type="entry name" value="ABC_transporter-like_ATP-bd"/>
</dbReference>
<dbReference type="InterPro" id="IPR017871">
    <property type="entry name" value="ABC_transporter-like_CS"/>
</dbReference>
<dbReference type="InterPro" id="IPR015856">
    <property type="entry name" value="ABC_transpr_CbiO/EcfA_su"/>
</dbReference>
<dbReference type="InterPro" id="IPR050095">
    <property type="entry name" value="ECF_ABC_transporter_ATP-bd"/>
</dbReference>
<dbReference type="InterPro" id="IPR030947">
    <property type="entry name" value="EcfA_1"/>
</dbReference>
<dbReference type="InterPro" id="IPR027417">
    <property type="entry name" value="P-loop_NTPase"/>
</dbReference>
<dbReference type="NCBIfam" id="TIGR04520">
    <property type="entry name" value="ECF_ATPase_1"/>
    <property type="match status" value="1"/>
</dbReference>
<dbReference type="NCBIfam" id="NF010167">
    <property type="entry name" value="PRK13648.1"/>
    <property type="match status" value="1"/>
</dbReference>
<dbReference type="PANTHER" id="PTHR43553:SF24">
    <property type="entry name" value="ENERGY-COUPLING FACTOR TRANSPORTER ATP-BINDING PROTEIN ECFA1"/>
    <property type="match status" value="1"/>
</dbReference>
<dbReference type="PANTHER" id="PTHR43553">
    <property type="entry name" value="HEAVY METAL TRANSPORTER"/>
    <property type="match status" value="1"/>
</dbReference>
<dbReference type="Pfam" id="PF00005">
    <property type="entry name" value="ABC_tran"/>
    <property type="match status" value="1"/>
</dbReference>
<dbReference type="SMART" id="SM00382">
    <property type="entry name" value="AAA"/>
    <property type="match status" value="1"/>
</dbReference>
<dbReference type="SUPFAM" id="SSF52540">
    <property type="entry name" value="P-loop containing nucleoside triphosphate hydrolases"/>
    <property type="match status" value="1"/>
</dbReference>
<dbReference type="PROSITE" id="PS00211">
    <property type="entry name" value="ABC_TRANSPORTER_1"/>
    <property type="match status" value="1"/>
</dbReference>
<dbReference type="PROSITE" id="PS50893">
    <property type="entry name" value="ABC_TRANSPORTER_2"/>
    <property type="match status" value="1"/>
</dbReference>
<dbReference type="PROSITE" id="PS51246">
    <property type="entry name" value="CBIO"/>
    <property type="match status" value="1"/>
</dbReference>
<sequence>MLPTKQAACSFINVAFSYNELPLIRELSFSVYEGEYVCIVGHNGSGKSTISKLLTGLLKPQAGEIKIFGKTVDFDNVSYLRNNIGIIFQNPDNQFIGITVEDDIAFGLENKCFSRQKIKAIIDEVTLQTQTDGFIKQEPHNLSGGQKQRVAIASVLALNPAIIIFDESTAMLDPKAKKTIKQFMVKLAKQGKCVISITHDMEEVTKADKVLVMNEGKLIKQGKPVEVFTSEQELQKIRLDIPFSLSLSTKIRGITSTIDYQTLIKSIAKLWKKR</sequence>
<proteinExistence type="inferred from homology"/>
<comment type="function">
    <text evidence="1">ATP-binding (A) component of a common energy-coupling factor (ECF) ABC-transporter complex. Unlike classic ABC transporters this ECF transporter provides the energy necessary to transport a number of different substrates.</text>
</comment>
<comment type="subunit">
    <text evidence="1">Forms a stable energy-coupling factor (ECF) transporter complex composed of 2 membrane-embedded substrate-binding proteins (S component), 2 ATP-binding proteins (A component) and 2 transmembrane proteins (T component).</text>
</comment>
<comment type="subcellular location">
    <subcellularLocation>
        <location evidence="1">Cell membrane</location>
        <topology evidence="1">Peripheral membrane protein</topology>
    </subcellularLocation>
</comment>
<comment type="similarity">
    <text evidence="1">Belongs to the ABC transporter superfamily. Energy-coupling factor EcfA family.</text>
</comment>